<gene>
    <name evidence="1" type="primary">nusB</name>
    <name type="ordered locus">RPA2729</name>
</gene>
<organism>
    <name type="scientific">Rhodopseudomonas palustris (strain ATCC BAA-98 / CGA009)</name>
    <dbReference type="NCBI Taxonomy" id="258594"/>
    <lineage>
        <taxon>Bacteria</taxon>
        <taxon>Pseudomonadati</taxon>
        <taxon>Pseudomonadota</taxon>
        <taxon>Alphaproteobacteria</taxon>
        <taxon>Hyphomicrobiales</taxon>
        <taxon>Nitrobacteraceae</taxon>
        <taxon>Rhodopseudomonas</taxon>
    </lineage>
</organism>
<evidence type="ECO:0000255" key="1">
    <source>
        <dbReference type="HAMAP-Rule" id="MF_00073"/>
    </source>
</evidence>
<comment type="function">
    <text evidence="1">Involved in transcription antitermination. Required for transcription of ribosomal RNA (rRNA) genes. Binds specifically to the boxA antiterminator sequence of the ribosomal RNA (rrn) operons.</text>
</comment>
<comment type="similarity">
    <text evidence="1">Belongs to the NusB family.</text>
</comment>
<name>NUSB_RHOPA</name>
<dbReference type="EMBL" id="BX572601">
    <property type="protein sequence ID" value="CAE28171.1"/>
    <property type="molecule type" value="Genomic_DNA"/>
</dbReference>
<dbReference type="RefSeq" id="WP_011158280.1">
    <property type="nucleotide sequence ID" value="NZ_CP116810.1"/>
</dbReference>
<dbReference type="SMR" id="Q6N688"/>
<dbReference type="STRING" id="258594.RPA2729"/>
<dbReference type="GeneID" id="66893805"/>
<dbReference type="eggNOG" id="COG0781">
    <property type="taxonomic scope" value="Bacteria"/>
</dbReference>
<dbReference type="HOGENOM" id="CLU_087843_4_0_5"/>
<dbReference type="PhylomeDB" id="Q6N688"/>
<dbReference type="GO" id="GO:0005829">
    <property type="term" value="C:cytosol"/>
    <property type="evidence" value="ECO:0007669"/>
    <property type="project" value="TreeGrafter"/>
</dbReference>
<dbReference type="GO" id="GO:0003723">
    <property type="term" value="F:RNA binding"/>
    <property type="evidence" value="ECO:0007669"/>
    <property type="project" value="UniProtKB-UniRule"/>
</dbReference>
<dbReference type="GO" id="GO:0006353">
    <property type="term" value="P:DNA-templated transcription termination"/>
    <property type="evidence" value="ECO:0007669"/>
    <property type="project" value="UniProtKB-UniRule"/>
</dbReference>
<dbReference type="GO" id="GO:0031564">
    <property type="term" value="P:transcription antitermination"/>
    <property type="evidence" value="ECO:0007669"/>
    <property type="project" value="UniProtKB-KW"/>
</dbReference>
<dbReference type="Gene3D" id="1.10.940.10">
    <property type="entry name" value="NusB-like"/>
    <property type="match status" value="1"/>
</dbReference>
<dbReference type="HAMAP" id="MF_00073">
    <property type="entry name" value="NusB"/>
    <property type="match status" value="1"/>
</dbReference>
<dbReference type="InterPro" id="IPR035926">
    <property type="entry name" value="NusB-like_sf"/>
</dbReference>
<dbReference type="InterPro" id="IPR011605">
    <property type="entry name" value="NusB_fam"/>
</dbReference>
<dbReference type="InterPro" id="IPR006027">
    <property type="entry name" value="NusB_RsmB_TIM44"/>
</dbReference>
<dbReference type="NCBIfam" id="TIGR01951">
    <property type="entry name" value="nusB"/>
    <property type="match status" value="1"/>
</dbReference>
<dbReference type="PANTHER" id="PTHR11078:SF3">
    <property type="entry name" value="ANTITERMINATION NUSB DOMAIN-CONTAINING PROTEIN"/>
    <property type="match status" value="1"/>
</dbReference>
<dbReference type="PANTHER" id="PTHR11078">
    <property type="entry name" value="N UTILIZATION SUBSTANCE PROTEIN B-RELATED"/>
    <property type="match status" value="1"/>
</dbReference>
<dbReference type="Pfam" id="PF01029">
    <property type="entry name" value="NusB"/>
    <property type="match status" value="1"/>
</dbReference>
<dbReference type="SUPFAM" id="SSF48013">
    <property type="entry name" value="NusB-like"/>
    <property type="match status" value="1"/>
</dbReference>
<reference key="1">
    <citation type="journal article" date="2004" name="Nat. Biotechnol.">
        <title>Complete genome sequence of the metabolically versatile photosynthetic bacterium Rhodopseudomonas palustris.</title>
        <authorList>
            <person name="Larimer F.W."/>
            <person name="Chain P."/>
            <person name="Hauser L."/>
            <person name="Lamerdin J.E."/>
            <person name="Malfatti S."/>
            <person name="Do L."/>
            <person name="Land M.L."/>
            <person name="Pelletier D.A."/>
            <person name="Beatty J.T."/>
            <person name="Lang A.S."/>
            <person name="Tabita F.R."/>
            <person name="Gibson J.L."/>
            <person name="Hanson T.E."/>
            <person name="Bobst C."/>
            <person name="Torres y Torres J.L."/>
            <person name="Peres C."/>
            <person name="Harrison F.H."/>
            <person name="Gibson J."/>
            <person name="Harwood C.S."/>
        </authorList>
    </citation>
    <scope>NUCLEOTIDE SEQUENCE [LARGE SCALE GENOMIC DNA]</scope>
    <source>
        <strain>ATCC BAA-98 / CGA009</strain>
    </source>
</reference>
<feature type="chain" id="PRO_0000265575" description="Transcription antitermination protein NusB">
    <location>
        <begin position="1"/>
        <end position="174"/>
    </location>
</feature>
<proteinExistence type="inferred from homology"/>
<keyword id="KW-0694">RNA-binding</keyword>
<keyword id="KW-0804">Transcription</keyword>
<keyword id="KW-0889">Transcription antitermination</keyword>
<keyword id="KW-0805">Transcription regulation</keyword>
<accession>Q6N688</accession>
<sequence length="174" mass="19621">MAEINKPAFKKPDLKKMTPKGERKANRRGAARLAAVQALYQMDIGGAGINETFAEFESFWIGNEVEGEQYLPAEAAFFRDIVAGVVREQKQIDPLIDDLLARGWPLARIDAILRAVMRAGAYELEHRKDIPARVVVSEYVDVAHAFVEKDETGMVNAVLDQIARRFREDEFTRS</sequence>
<protein>
    <recommendedName>
        <fullName evidence="1">Transcription antitermination protein NusB</fullName>
    </recommendedName>
    <alternativeName>
        <fullName evidence="1">Antitermination factor NusB</fullName>
    </alternativeName>
</protein>